<keyword id="KW-0030">Aminoacyl-tRNA synthetase</keyword>
<keyword id="KW-0067">ATP-binding</keyword>
<keyword id="KW-0963">Cytoplasm</keyword>
<keyword id="KW-0436">Ligase</keyword>
<keyword id="KW-0460">Magnesium</keyword>
<keyword id="KW-0479">Metal-binding</keyword>
<keyword id="KW-0547">Nucleotide-binding</keyword>
<keyword id="KW-0648">Protein biosynthesis</keyword>
<organism>
    <name type="scientific">Xanthomonas campestris pv. campestris (strain 8004)</name>
    <dbReference type="NCBI Taxonomy" id="314565"/>
    <lineage>
        <taxon>Bacteria</taxon>
        <taxon>Pseudomonadati</taxon>
        <taxon>Pseudomonadota</taxon>
        <taxon>Gammaproteobacteria</taxon>
        <taxon>Lysobacterales</taxon>
        <taxon>Lysobacteraceae</taxon>
        <taxon>Xanthomonas</taxon>
    </lineage>
</organism>
<name>SYFA_XANC8</name>
<evidence type="ECO:0000255" key="1">
    <source>
        <dbReference type="HAMAP-Rule" id="MF_00281"/>
    </source>
</evidence>
<comment type="catalytic activity">
    <reaction evidence="1">
        <text>tRNA(Phe) + L-phenylalanine + ATP = L-phenylalanyl-tRNA(Phe) + AMP + diphosphate + H(+)</text>
        <dbReference type="Rhea" id="RHEA:19413"/>
        <dbReference type="Rhea" id="RHEA-COMP:9668"/>
        <dbReference type="Rhea" id="RHEA-COMP:9699"/>
        <dbReference type="ChEBI" id="CHEBI:15378"/>
        <dbReference type="ChEBI" id="CHEBI:30616"/>
        <dbReference type="ChEBI" id="CHEBI:33019"/>
        <dbReference type="ChEBI" id="CHEBI:58095"/>
        <dbReference type="ChEBI" id="CHEBI:78442"/>
        <dbReference type="ChEBI" id="CHEBI:78531"/>
        <dbReference type="ChEBI" id="CHEBI:456215"/>
        <dbReference type="EC" id="6.1.1.20"/>
    </reaction>
</comment>
<comment type="cofactor">
    <cofactor evidence="1">
        <name>Mg(2+)</name>
        <dbReference type="ChEBI" id="CHEBI:18420"/>
    </cofactor>
    <text evidence="1">Binds 2 magnesium ions per tetramer.</text>
</comment>
<comment type="subunit">
    <text evidence="1">Tetramer of two alpha and two beta subunits.</text>
</comment>
<comment type="subcellular location">
    <subcellularLocation>
        <location evidence="1">Cytoplasm</location>
    </subcellularLocation>
</comment>
<comment type="similarity">
    <text evidence="1">Belongs to the class-II aminoacyl-tRNA synthetase family. Phe-tRNA synthetase alpha subunit type 1 subfamily.</text>
</comment>
<reference key="1">
    <citation type="journal article" date="2005" name="Genome Res.">
        <title>Comparative and functional genomic analyses of the pathogenicity of phytopathogen Xanthomonas campestris pv. campestris.</title>
        <authorList>
            <person name="Qian W."/>
            <person name="Jia Y."/>
            <person name="Ren S.-X."/>
            <person name="He Y.-Q."/>
            <person name="Feng J.-X."/>
            <person name="Lu L.-F."/>
            <person name="Sun Q."/>
            <person name="Ying G."/>
            <person name="Tang D.-J."/>
            <person name="Tang H."/>
            <person name="Wu W."/>
            <person name="Hao P."/>
            <person name="Wang L."/>
            <person name="Jiang B.-L."/>
            <person name="Zeng S."/>
            <person name="Gu W.-Y."/>
            <person name="Lu G."/>
            <person name="Rong L."/>
            <person name="Tian Y."/>
            <person name="Yao Z."/>
            <person name="Fu G."/>
            <person name="Chen B."/>
            <person name="Fang R."/>
            <person name="Qiang B."/>
            <person name="Chen Z."/>
            <person name="Zhao G.-P."/>
            <person name="Tang J.-L."/>
            <person name="He C."/>
        </authorList>
    </citation>
    <scope>NUCLEOTIDE SEQUENCE [LARGE SCALE GENOMIC DNA]</scope>
    <source>
        <strain>8004</strain>
    </source>
</reference>
<protein>
    <recommendedName>
        <fullName evidence="1">Phenylalanine--tRNA ligase alpha subunit</fullName>
        <ecNumber evidence="1">6.1.1.20</ecNumber>
    </recommendedName>
    <alternativeName>
        <fullName evidence="1">Phenylalanyl-tRNA synthetase alpha subunit</fullName>
        <shortName evidence="1">PheRS</shortName>
    </alternativeName>
</protein>
<sequence>MSEIQSLTAQALADVAAAHTPDQLETLRVALLGKNGSITAQLKQLGTLPADQRKAAGEAINLARDALTTALSERKQVLETAALDARLEGERIDVTLPGRRGERGGLHPVTRTLERIVEIFARLGYELSDGPEIEDDWHNFEALNFPPHHPARAMHDTFYFGDGRLLRTHTSGVQVRYMDTAVATKSGPPLRMIAAGKVYRSDSDQTHSPMFHQVEGLLVDEHSNFADLKGTLSEFVRAFFERDFEMRFRPSYFPFVEPGAEVDIAWQQPDGSTRWLEVLGCGMVHPNVLRSVGIDPERYTGFAFGLGVERFAMLRYGVNDLRAFFENDVRFLRQFA</sequence>
<dbReference type="EC" id="6.1.1.20" evidence="1"/>
<dbReference type="EMBL" id="CP000050">
    <property type="protein sequence ID" value="AAY48720.1"/>
    <property type="molecule type" value="Genomic_DNA"/>
</dbReference>
<dbReference type="RefSeq" id="WP_011037597.1">
    <property type="nucleotide sequence ID" value="NZ_CP155948.1"/>
</dbReference>
<dbReference type="SMR" id="Q4UW53"/>
<dbReference type="KEGG" id="xcb:XC_1654"/>
<dbReference type="HOGENOM" id="CLU_025086_0_1_6"/>
<dbReference type="Proteomes" id="UP000000420">
    <property type="component" value="Chromosome"/>
</dbReference>
<dbReference type="GO" id="GO:0005737">
    <property type="term" value="C:cytoplasm"/>
    <property type="evidence" value="ECO:0007669"/>
    <property type="project" value="UniProtKB-SubCell"/>
</dbReference>
<dbReference type="GO" id="GO:0005524">
    <property type="term" value="F:ATP binding"/>
    <property type="evidence" value="ECO:0007669"/>
    <property type="project" value="UniProtKB-UniRule"/>
</dbReference>
<dbReference type="GO" id="GO:0000287">
    <property type="term" value="F:magnesium ion binding"/>
    <property type="evidence" value="ECO:0007669"/>
    <property type="project" value="UniProtKB-UniRule"/>
</dbReference>
<dbReference type="GO" id="GO:0004826">
    <property type="term" value="F:phenylalanine-tRNA ligase activity"/>
    <property type="evidence" value="ECO:0007669"/>
    <property type="project" value="UniProtKB-UniRule"/>
</dbReference>
<dbReference type="GO" id="GO:0000049">
    <property type="term" value="F:tRNA binding"/>
    <property type="evidence" value="ECO:0007669"/>
    <property type="project" value="InterPro"/>
</dbReference>
<dbReference type="GO" id="GO:0006432">
    <property type="term" value="P:phenylalanyl-tRNA aminoacylation"/>
    <property type="evidence" value="ECO:0007669"/>
    <property type="project" value="UniProtKB-UniRule"/>
</dbReference>
<dbReference type="CDD" id="cd00496">
    <property type="entry name" value="PheRS_alpha_core"/>
    <property type="match status" value="1"/>
</dbReference>
<dbReference type="FunFam" id="3.30.930.10:FF:000003">
    <property type="entry name" value="Phenylalanine--tRNA ligase alpha subunit"/>
    <property type="match status" value="1"/>
</dbReference>
<dbReference type="Gene3D" id="3.30.930.10">
    <property type="entry name" value="Bira Bifunctional Protein, Domain 2"/>
    <property type="match status" value="1"/>
</dbReference>
<dbReference type="HAMAP" id="MF_00281">
    <property type="entry name" value="Phe_tRNA_synth_alpha1"/>
    <property type="match status" value="1"/>
</dbReference>
<dbReference type="InterPro" id="IPR006195">
    <property type="entry name" value="aa-tRNA-synth_II"/>
</dbReference>
<dbReference type="InterPro" id="IPR045864">
    <property type="entry name" value="aa-tRNA-synth_II/BPL/LPL"/>
</dbReference>
<dbReference type="InterPro" id="IPR004529">
    <property type="entry name" value="Phe-tRNA-synth_IIc_asu"/>
</dbReference>
<dbReference type="InterPro" id="IPR004188">
    <property type="entry name" value="Phe-tRNA_ligase_II_N"/>
</dbReference>
<dbReference type="InterPro" id="IPR022911">
    <property type="entry name" value="Phe_tRNA_ligase_alpha1_bac"/>
</dbReference>
<dbReference type="InterPro" id="IPR002319">
    <property type="entry name" value="Phenylalanyl-tRNA_Synthase"/>
</dbReference>
<dbReference type="InterPro" id="IPR010978">
    <property type="entry name" value="tRNA-bd_arm"/>
</dbReference>
<dbReference type="NCBIfam" id="TIGR00468">
    <property type="entry name" value="pheS"/>
    <property type="match status" value="1"/>
</dbReference>
<dbReference type="PANTHER" id="PTHR11538:SF41">
    <property type="entry name" value="PHENYLALANINE--TRNA LIGASE, MITOCHONDRIAL"/>
    <property type="match status" value="1"/>
</dbReference>
<dbReference type="PANTHER" id="PTHR11538">
    <property type="entry name" value="PHENYLALANYL-TRNA SYNTHETASE"/>
    <property type="match status" value="1"/>
</dbReference>
<dbReference type="Pfam" id="PF02912">
    <property type="entry name" value="Phe_tRNA-synt_N"/>
    <property type="match status" value="1"/>
</dbReference>
<dbReference type="Pfam" id="PF01409">
    <property type="entry name" value="tRNA-synt_2d"/>
    <property type="match status" value="1"/>
</dbReference>
<dbReference type="SUPFAM" id="SSF55681">
    <property type="entry name" value="Class II aaRS and biotin synthetases"/>
    <property type="match status" value="1"/>
</dbReference>
<dbReference type="SUPFAM" id="SSF46589">
    <property type="entry name" value="tRNA-binding arm"/>
    <property type="match status" value="1"/>
</dbReference>
<dbReference type="PROSITE" id="PS50862">
    <property type="entry name" value="AA_TRNA_LIGASE_II"/>
    <property type="match status" value="1"/>
</dbReference>
<gene>
    <name evidence="1" type="primary">pheS</name>
    <name type="ordered locus">XC_1654</name>
</gene>
<proteinExistence type="inferred from homology"/>
<feature type="chain" id="PRO_0000232039" description="Phenylalanine--tRNA ligase alpha subunit">
    <location>
        <begin position="1"/>
        <end position="336"/>
    </location>
</feature>
<feature type="binding site" evidence="1">
    <location>
        <position position="257"/>
    </location>
    <ligand>
        <name>Mg(2+)</name>
        <dbReference type="ChEBI" id="CHEBI:18420"/>
        <note>shared with beta subunit</note>
    </ligand>
</feature>
<accession>Q4UW53</accession>